<accession>Q9FYK5</accession>
<reference key="1">
    <citation type="submission" date="2004-02" db="EMBL/GenBank/DDBJ databases">
        <title>Molecular cloning, expression, phylogenetic and functional characterization of the Arabidopsis AP2/EREBP transcription factor family.</title>
        <authorList>
            <person name="Pan Y."/>
            <person name="Gong W."/>
            <person name="Liu D."/>
            <person name="Fu Q."/>
            <person name="Mei W.-Q."/>
            <person name="Song W.-Q."/>
            <person name="Ma L.-G."/>
            <person name="Luo J.-C."/>
            <person name="Deng X.-W."/>
            <person name="Zhu Y.-X."/>
        </authorList>
    </citation>
    <scope>NUCLEOTIDE SEQUENCE [MRNA]</scope>
</reference>
<reference key="2">
    <citation type="journal article" date="2000" name="Nature">
        <title>Sequence and analysis of chromosome 1 of the plant Arabidopsis thaliana.</title>
        <authorList>
            <person name="Theologis A."/>
            <person name="Ecker J.R."/>
            <person name="Palm C.J."/>
            <person name="Federspiel N.A."/>
            <person name="Kaul S."/>
            <person name="White O."/>
            <person name="Alonso J."/>
            <person name="Altafi H."/>
            <person name="Araujo R."/>
            <person name="Bowman C.L."/>
            <person name="Brooks S.Y."/>
            <person name="Buehler E."/>
            <person name="Chan A."/>
            <person name="Chao Q."/>
            <person name="Chen H."/>
            <person name="Cheuk R.F."/>
            <person name="Chin C.W."/>
            <person name="Chung M.K."/>
            <person name="Conn L."/>
            <person name="Conway A.B."/>
            <person name="Conway A.R."/>
            <person name="Creasy T.H."/>
            <person name="Dewar K."/>
            <person name="Dunn P."/>
            <person name="Etgu P."/>
            <person name="Feldblyum T.V."/>
            <person name="Feng J.-D."/>
            <person name="Fong B."/>
            <person name="Fujii C.Y."/>
            <person name="Gill J.E."/>
            <person name="Goldsmith A.D."/>
            <person name="Haas B."/>
            <person name="Hansen N.F."/>
            <person name="Hughes B."/>
            <person name="Huizar L."/>
            <person name="Hunter J.L."/>
            <person name="Jenkins J."/>
            <person name="Johnson-Hopson C."/>
            <person name="Khan S."/>
            <person name="Khaykin E."/>
            <person name="Kim C.J."/>
            <person name="Koo H.L."/>
            <person name="Kremenetskaia I."/>
            <person name="Kurtz D.B."/>
            <person name="Kwan A."/>
            <person name="Lam B."/>
            <person name="Langin-Hooper S."/>
            <person name="Lee A."/>
            <person name="Lee J.M."/>
            <person name="Lenz C.A."/>
            <person name="Li J.H."/>
            <person name="Li Y.-P."/>
            <person name="Lin X."/>
            <person name="Liu S.X."/>
            <person name="Liu Z.A."/>
            <person name="Luros J.S."/>
            <person name="Maiti R."/>
            <person name="Marziali A."/>
            <person name="Militscher J."/>
            <person name="Miranda M."/>
            <person name="Nguyen M."/>
            <person name="Nierman W.C."/>
            <person name="Osborne B.I."/>
            <person name="Pai G."/>
            <person name="Peterson J."/>
            <person name="Pham P.K."/>
            <person name="Rizzo M."/>
            <person name="Rooney T."/>
            <person name="Rowley D."/>
            <person name="Sakano H."/>
            <person name="Salzberg S.L."/>
            <person name="Schwartz J.R."/>
            <person name="Shinn P."/>
            <person name="Southwick A.M."/>
            <person name="Sun H."/>
            <person name="Tallon L.J."/>
            <person name="Tambunga G."/>
            <person name="Toriumi M.J."/>
            <person name="Town C.D."/>
            <person name="Utterback T."/>
            <person name="Van Aken S."/>
            <person name="Vaysberg M."/>
            <person name="Vysotskaia V.S."/>
            <person name="Walker M."/>
            <person name="Wu D."/>
            <person name="Yu G."/>
            <person name="Fraser C.M."/>
            <person name="Venter J.C."/>
            <person name="Davis R.W."/>
        </authorList>
    </citation>
    <scope>NUCLEOTIDE SEQUENCE [LARGE SCALE GENOMIC DNA]</scope>
    <source>
        <strain>cv. Columbia</strain>
    </source>
</reference>
<reference key="3">
    <citation type="journal article" date="2017" name="Plant J.">
        <title>Araport11: a complete reannotation of the Arabidopsis thaliana reference genome.</title>
        <authorList>
            <person name="Cheng C.Y."/>
            <person name="Krishnakumar V."/>
            <person name="Chan A.P."/>
            <person name="Thibaud-Nissen F."/>
            <person name="Schobel S."/>
            <person name="Town C.D."/>
        </authorList>
    </citation>
    <scope>GENOME REANNOTATION</scope>
    <source>
        <strain>cv. Columbia</strain>
    </source>
</reference>
<reference key="4">
    <citation type="submission" date="2006-07" db="EMBL/GenBank/DDBJ databases">
        <title>Arabidopsis ORF clones.</title>
        <authorList>
            <person name="Quinitio C."/>
            <person name="Chen H."/>
            <person name="Kim C.J."/>
            <person name="Shinn P."/>
            <person name="Ecker J.R."/>
        </authorList>
    </citation>
    <scope>NUCLEOTIDE SEQUENCE [LARGE SCALE MRNA]</scope>
    <source>
        <strain>cv. Columbia</strain>
    </source>
</reference>
<reference key="5">
    <citation type="journal article" date="2006" name="Plant Cell">
        <title>A new role for the Arabidopsis AP2 transcription factor, LEAFY PETIOLE, in gibberellin-induced germination is revealed by the misexpression of a homologous gene, SOB2/DRN-LIKE.</title>
        <authorList>
            <person name="Ward J.M."/>
            <person name="Smith A.M."/>
            <person name="Shah P.K."/>
            <person name="Galanti S.E."/>
            <person name="Yi H."/>
            <person name="Demianski A.J."/>
            <person name="van der Graaff E."/>
            <person name="Keller B."/>
            <person name="Neff M.M."/>
        </authorList>
    </citation>
    <scope>FUNCTION</scope>
</reference>
<reference key="6">
    <citation type="journal article" date="2006" name="Plant Cell Physiol.">
        <title>The ENHANCER OF SHOOT REGENERATION 2 gene in Arabidopsis regulates CUP-SHAPED COTYLEDON 1 at the transcriptional level and controls cotyledon development.</title>
        <authorList>
            <person name="Ikeda Y."/>
            <person name="Banno H."/>
            <person name="Niu Q.-W."/>
            <person name="Howell S.H."/>
            <person name="Chua N.-H."/>
        </authorList>
    </citation>
    <scope>FUNCTION</scope>
    <scope>TISSUE SPECIFICITY</scope>
    <scope>DEVELOPMENTAL STAGE</scope>
</reference>
<reference key="7">
    <citation type="journal article" date="2006" name="Plant Physiol.">
        <title>Genome-wide analysis of the ERF gene family in Arabidopsis and rice.</title>
        <authorList>
            <person name="Nakano T."/>
            <person name="Suzuki K."/>
            <person name="Fujimura T."/>
            <person name="Shinshi H."/>
        </authorList>
    </citation>
    <scope>GENE FAMILY</scope>
    <scope>NOMENCLATURE</scope>
</reference>
<reference key="8">
    <citation type="journal article" date="2007" name="Development">
        <title>The AP2 transcription factors DORNROSCHEN and DORNROSCHEN-LIKE redundantly control Arabidopsis embryo patterning via interaction with PHAVOLUTA.</title>
        <authorList>
            <person name="Chandler J.W."/>
            <person name="Cole M."/>
            <person name="Flier A."/>
            <person name="Grewe B."/>
            <person name="Werr W."/>
        </authorList>
    </citation>
    <scope>FUNCTION</scope>
    <scope>TISSUE SPECIFICITY</scope>
    <scope>INTERACTION WITH ATHB-8; CNA; PHB; PHV AND REV</scope>
    <scope>DEVELOPMENTAL STAGE</scope>
</reference>
<keyword id="KW-0010">Activator</keyword>
<keyword id="KW-0932">Cytokinin signaling pathway</keyword>
<keyword id="KW-0238">DNA-binding</keyword>
<keyword id="KW-0936">Ethylene signaling pathway</keyword>
<keyword id="KW-0939">Gibberellin signaling pathway</keyword>
<keyword id="KW-0539">Nucleus</keyword>
<keyword id="KW-1185">Reference proteome</keyword>
<keyword id="KW-0804">Transcription</keyword>
<keyword id="KW-0805">Transcription regulation</keyword>
<organism>
    <name type="scientific">Arabidopsis thaliana</name>
    <name type="common">Mouse-ear cress</name>
    <dbReference type="NCBI Taxonomy" id="3702"/>
    <lineage>
        <taxon>Eukaryota</taxon>
        <taxon>Viridiplantae</taxon>
        <taxon>Streptophyta</taxon>
        <taxon>Embryophyta</taxon>
        <taxon>Tracheophyta</taxon>
        <taxon>Spermatophyta</taxon>
        <taxon>Magnoliopsida</taxon>
        <taxon>eudicotyledons</taxon>
        <taxon>Gunneridae</taxon>
        <taxon>Pentapetalae</taxon>
        <taxon>rosids</taxon>
        <taxon>malvids</taxon>
        <taxon>Brassicales</taxon>
        <taxon>Brassicaceae</taxon>
        <taxon>Camelineae</taxon>
        <taxon>Arabidopsis</taxon>
    </lineage>
</organism>
<evidence type="ECO:0000250" key="1"/>
<evidence type="ECO:0000255" key="2">
    <source>
        <dbReference type="PROSITE-ProRule" id="PRU00366"/>
    </source>
</evidence>
<evidence type="ECO:0000256" key="3">
    <source>
        <dbReference type="SAM" id="MobiDB-lite"/>
    </source>
</evidence>
<evidence type="ECO:0000269" key="4">
    <source>
    </source>
</evidence>
<evidence type="ECO:0000269" key="5">
    <source>
    </source>
</evidence>
<evidence type="ECO:0000269" key="6">
    <source>
    </source>
</evidence>
<evidence type="ECO:0000305" key="7"/>
<name>ESR2_ARATH</name>
<gene>
    <name type="primary">ESR2</name>
    <name type="synonym">DRNL</name>
    <name type="synonym">ERF090</name>
    <name type="synonym">SOB2</name>
    <name type="ordered locus">At1g24590</name>
    <name type="ORF">F21J9.25</name>
</gene>
<feature type="chain" id="PRO_0000297928" description="Ethylene-responsive transcription factor ESR2">
    <location>
        <begin position="1"/>
        <end position="306"/>
    </location>
</feature>
<feature type="DNA-binding region" description="AP2/ERF" evidence="2">
    <location>
        <begin position="57"/>
        <end position="114"/>
    </location>
</feature>
<feature type="region of interest" description="Disordered" evidence="3">
    <location>
        <begin position="1"/>
        <end position="46"/>
    </location>
</feature>
<feature type="compositionally biased region" description="Basic and acidic residues" evidence="3">
    <location>
        <begin position="1"/>
        <end position="17"/>
    </location>
</feature>
<proteinExistence type="evidence at protein level"/>
<protein>
    <recommendedName>
        <fullName>Ethylene-responsive transcription factor ESR2</fullName>
    </recommendedName>
    <alternativeName>
        <fullName>Protein DORNROESCHEN-LIKE</fullName>
        <shortName>Protein DRN-LIKE</shortName>
    </alternativeName>
    <alternativeName>
        <fullName>Protein ENHANCER OF SHOOT REGENERATION 2</fullName>
    </alternativeName>
    <alternativeName>
        <fullName>Protein SUPPRESSOR OF PHYTOCHROMEB 2</fullName>
    </alternativeName>
</protein>
<dbReference type="EMBL" id="AY560889">
    <property type="protein sequence ID" value="AAT44956.1"/>
    <property type="molecule type" value="mRNA"/>
</dbReference>
<dbReference type="EMBL" id="AC000103">
    <property type="protein sequence ID" value="AAF97975.1"/>
    <property type="molecule type" value="Genomic_DNA"/>
</dbReference>
<dbReference type="EMBL" id="CP002684">
    <property type="protein sequence ID" value="AEE30551.1"/>
    <property type="molecule type" value="Genomic_DNA"/>
</dbReference>
<dbReference type="EMBL" id="BT026073">
    <property type="protein sequence ID" value="ABG48429.1"/>
    <property type="molecule type" value="mRNA"/>
</dbReference>
<dbReference type="RefSeq" id="NP_173864.1">
    <property type="nucleotide sequence ID" value="NM_102301.2"/>
</dbReference>
<dbReference type="SMR" id="Q9FYK5"/>
<dbReference type="BioGRID" id="24311">
    <property type="interactions" value="24"/>
</dbReference>
<dbReference type="FunCoup" id="Q9FYK5">
    <property type="interactions" value="18"/>
</dbReference>
<dbReference type="IntAct" id="Q9FYK5">
    <property type="interactions" value="24"/>
</dbReference>
<dbReference type="STRING" id="3702.Q9FYK5"/>
<dbReference type="PaxDb" id="3702-AT1G24590.1"/>
<dbReference type="EnsemblPlants" id="AT1G24590.1">
    <property type="protein sequence ID" value="AT1G24590.1"/>
    <property type="gene ID" value="AT1G24590"/>
</dbReference>
<dbReference type="GeneID" id="839073"/>
<dbReference type="Gramene" id="AT1G24590.1">
    <property type="protein sequence ID" value="AT1G24590.1"/>
    <property type="gene ID" value="AT1G24590"/>
</dbReference>
<dbReference type="KEGG" id="ath:AT1G24590"/>
<dbReference type="Araport" id="AT1G24590"/>
<dbReference type="TAIR" id="AT1G24590">
    <property type="gene designation" value="DRNL"/>
</dbReference>
<dbReference type="HOGENOM" id="CLU_925449_0_0_1"/>
<dbReference type="InParanoid" id="Q9FYK5"/>
<dbReference type="OMA" id="GFGQVKY"/>
<dbReference type="PhylomeDB" id="Q9FYK5"/>
<dbReference type="PRO" id="PR:Q9FYK5"/>
<dbReference type="Proteomes" id="UP000006548">
    <property type="component" value="Chromosome 1"/>
</dbReference>
<dbReference type="ExpressionAtlas" id="Q9FYK5">
    <property type="expression patterns" value="baseline and differential"/>
</dbReference>
<dbReference type="GO" id="GO:0005634">
    <property type="term" value="C:nucleus"/>
    <property type="evidence" value="ECO:0007669"/>
    <property type="project" value="UniProtKB-SubCell"/>
</dbReference>
<dbReference type="GO" id="GO:0003677">
    <property type="term" value="F:DNA binding"/>
    <property type="evidence" value="ECO:0007669"/>
    <property type="project" value="UniProtKB-KW"/>
</dbReference>
<dbReference type="GO" id="GO:0003700">
    <property type="term" value="F:DNA-binding transcription factor activity"/>
    <property type="evidence" value="ECO:0000250"/>
    <property type="project" value="TAIR"/>
</dbReference>
<dbReference type="GO" id="GO:0048825">
    <property type="term" value="P:cotyledon development"/>
    <property type="evidence" value="ECO:0000315"/>
    <property type="project" value="TAIR"/>
</dbReference>
<dbReference type="GO" id="GO:0009736">
    <property type="term" value="P:cytokinin-activated signaling pathway"/>
    <property type="evidence" value="ECO:0007669"/>
    <property type="project" value="UniProtKB-KW"/>
</dbReference>
<dbReference type="GO" id="GO:0009880">
    <property type="term" value="P:embryonic pattern specification"/>
    <property type="evidence" value="ECO:0000315"/>
    <property type="project" value="TAIR"/>
</dbReference>
<dbReference type="GO" id="GO:0009873">
    <property type="term" value="P:ethylene-activated signaling pathway"/>
    <property type="evidence" value="ECO:0007669"/>
    <property type="project" value="UniProtKB-KW"/>
</dbReference>
<dbReference type="GO" id="GO:0009740">
    <property type="term" value="P:gibberellic acid mediated signaling pathway"/>
    <property type="evidence" value="ECO:0007669"/>
    <property type="project" value="UniProtKB-KW"/>
</dbReference>
<dbReference type="GO" id="GO:0051726">
    <property type="term" value="P:regulation of cell cycle"/>
    <property type="evidence" value="ECO:0000315"/>
    <property type="project" value="TAIR"/>
</dbReference>
<dbReference type="GO" id="GO:0006355">
    <property type="term" value="P:regulation of DNA-templated transcription"/>
    <property type="evidence" value="ECO:0000315"/>
    <property type="project" value="TAIR"/>
</dbReference>
<dbReference type="GO" id="GO:0009733">
    <property type="term" value="P:response to auxin"/>
    <property type="evidence" value="ECO:0000270"/>
    <property type="project" value="TAIR"/>
</dbReference>
<dbReference type="CDD" id="cd00018">
    <property type="entry name" value="AP2"/>
    <property type="match status" value="1"/>
</dbReference>
<dbReference type="FunFam" id="3.30.730.10:FF:000001">
    <property type="entry name" value="Ethylene-responsive transcription factor 2"/>
    <property type="match status" value="1"/>
</dbReference>
<dbReference type="Gene3D" id="3.30.730.10">
    <property type="entry name" value="AP2/ERF domain"/>
    <property type="match status" value="1"/>
</dbReference>
<dbReference type="InterPro" id="IPR001471">
    <property type="entry name" value="AP2/ERF_dom"/>
</dbReference>
<dbReference type="InterPro" id="IPR036955">
    <property type="entry name" value="AP2/ERF_dom_sf"/>
</dbReference>
<dbReference type="InterPro" id="IPR016177">
    <property type="entry name" value="DNA-bd_dom_sf"/>
</dbReference>
<dbReference type="PANTHER" id="PTHR31677">
    <property type="entry name" value="AP2 DOMAIN CLASS TRANSCRIPTION FACTOR"/>
    <property type="match status" value="1"/>
</dbReference>
<dbReference type="PANTHER" id="PTHR31677:SF146">
    <property type="entry name" value="ETHYLENE-RESPONSIVE TRANSCRIPTION FACTOR ESR2"/>
    <property type="match status" value="1"/>
</dbReference>
<dbReference type="Pfam" id="PF00847">
    <property type="entry name" value="AP2"/>
    <property type="match status" value="1"/>
</dbReference>
<dbReference type="PRINTS" id="PR00367">
    <property type="entry name" value="ETHRSPELEMNT"/>
</dbReference>
<dbReference type="SMART" id="SM00380">
    <property type="entry name" value="AP2"/>
    <property type="match status" value="1"/>
</dbReference>
<dbReference type="SUPFAM" id="SSF54171">
    <property type="entry name" value="DNA-binding domain"/>
    <property type="match status" value="1"/>
</dbReference>
<dbReference type="PROSITE" id="PS51032">
    <property type="entry name" value="AP2_ERF"/>
    <property type="match status" value="1"/>
</dbReference>
<sequence>MEEAIMRLEGAEHRETNIHSLKRKPSRTSSTAPGSPGGVTTAKAASGAGASGVSTIRYRGVRRRPWGRYAAEIRDPLSKERRWLGTFDTAEEAACAYDCAARAMRGLKARTNFVYPMPSLDSYHHRIFSSPPMNMFLLRDVLNSQSLSPLTTFAYPPCNLSNVNDVVHESFTNVNDVCEDLSPKAKRSSTIENESLISNIFEPEPASSGLLQEIVQGFLPKPISQHASIPPKSNQQSVGVFPTMPESGFQTDVRLADFHVEGNGFGQVKYHGELGWADHENGFDSAKMQQNGNGGMFYQYCFHDDY</sequence>
<comment type="function">
    <text evidence="1 4 5 6">Required for correct embryo patterning and cotyledon organogenesis. May positively regulate the gibberellin signaling pathway leading to germination, hypocotyl elongation, and leaf expansion. Involved in the cytokinin signaling pathway that promotes shoot regeneration, probably through transcriptional activation of target genes such as CUC1. Acts as a transcriptional activator. Binds to the GCC-box pathogenesis-related promoter element. May be involved in the regulation of gene expression by stress factors and by components of stress signal transduction pathways (By similarity).</text>
</comment>
<comment type="subunit">
    <text evidence="6">Interacts with class 3 HD-ZIP proteins such as ATHB-8, CNA, PHB, PHV, and REV.</text>
</comment>
<comment type="interaction">
    <interactant intactId="EBI-1536925">
        <id>Q9FYK5</id>
    </interactant>
    <interactant intactId="EBI-4424705">
        <id>Q9SX22</id>
        <label>At1g68590</label>
    </interactant>
    <organismsDiffer>false</organismsDiffer>
    <experiments>3</experiments>
</comment>
<comment type="interaction">
    <interactant intactId="EBI-1536925">
        <id>Q9FYK5</id>
    </interactant>
    <interactant intactId="EBI-1238139">
        <id>Q9LYL6</id>
        <label>At3g56270</label>
    </interactant>
    <organismsDiffer>false</organismsDiffer>
    <experiments>3</experiments>
</comment>
<comment type="interaction">
    <interactant intactId="EBI-1536925">
        <id>Q9FYK5</id>
    </interactant>
    <interactant intactId="EBI-1239007">
        <id>Q8GYP4</id>
        <label>At4g18630/F28A21_40</label>
    </interactant>
    <organismsDiffer>false</organismsDiffer>
    <experiments>3</experiments>
</comment>
<comment type="interaction">
    <interactant intactId="EBI-1536925">
        <id>Q9FYK5</id>
    </interactant>
    <interactant intactId="EBI-4436601">
        <id>Q945P2</id>
        <label>At5g49210</label>
    </interactant>
    <organismsDiffer>false</organismsDiffer>
    <experiments>5</experiments>
</comment>
<comment type="interaction">
    <interactant intactId="EBI-1536925">
        <id>Q9FYK5</id>
    </interactant>
    <interactant intactId="EBI-1536772">
        <id>O04292</id>
        <label>ATHB-9</label>
    </interactant>
    <organismsDiffer>false</organismsDiffer>
    <experiments>2</experiments>
</comment>
<comment type="interaction">
    <interactant intactId="EBI-1536925">
        <id>Q9FYK5</id>
    </interactant>
    <interactant intactId="EBI-25521598">
        <id>A0A178VUV0</id>
        <label>AXX17_At2g20630</label>
    </interactant>
    <organismsDiffer>false</organismsDiffer>
    <experiments>3</experiments>
</comment>
<comment type="interaction">
    <interactant intactId="EBI-1536925">
        <id>Q9FYK5</id>
    </interactant>
    <interactant intactId="EBI-25521512">
        <id>A0A178VYP6</id>
        <label>AXX17_At2g35160</label>
    </interactant>
    <organismsDiffer>false</organismsDiffer>
    <experiments>3</experiments>
</comment>
<comment type="interaction">
    <interactant intactId="EBI-1536925">
        <id>Q9FYK5</id>
    </interactant>
    <interactant intactId="EBI-25521581">
        <id>A0A178VN99</id>
        <label>AXX17_At2g40150</label>
    </interactant>
    <organismsDiffer>false</organismsDiffer>
    <experiments>3</experiments>
</comment>
<comment type="interaction">
    <interactant intactId="EBI-1536925">
        <id>Q9FYK5</id>
    </interactant>
    <interactant intactId="EBI-617095">
        <id>Q9LEZ3</id>
        <label>BIM1</label>
    </interactant>
    <organismsDiffer>false</organismsDiffer>
    <experiments>2</experiments>
</comment>
<comment type="interaction">
    <interactant intactId="EBI-1536925">
        <id>Q9FYK5</id>
    </interactant>
    <interactant intactId="EBI-4446727">
        <id>Q94ID6</id>
        <label>ERF12</label>
    </interactant>
    <organismsDiffer>false</organismsDiffer>
    <experiments>4</experiments>
</comment>
<comment type="interaction">
    <interactant intactId="EBI-1536925">
        <id>Q9FYK5</id>
    </interactant>
    <interactant intactId="EBI-2000137">
        <id>Q9MAI5</id>
        <label>ERF8</label>
    </interactant>
    <organismsDiffer>false</organismsDiffer>
    <experiments>3</experiments>
</comment>
<comment type="interaction">
    <interactant intactId="EBI-1536925">
        <id>Q9FYK5</id>
    </interactant>
    <interactant intactId="EBI-4426378">
        <id>Q39103</id>
        <label>GA3OX1</label>
    </interactant>
    <organismsDiffer>false</organismsDiffer>
    <experiments>5</experiments>
</comment>
<comment type="interaction">
    <interactant intactId="EBI-1536925">
        <id>Q9FYK5</id>
    </interactant>
    <interactant intactId="EBI-4434651">
        <id>Q8LF89</id>
        <label>GRXC8</label>
    </interactant>
    <organismsDiffer>false</organismsDiffer>
    <experiments>4</experiments>
</comment>
<comment type="interaction">
    <interactant intactId="EBI-1536925">
        <id>Q9FYK5</id>
    </interactant>
    <interactant intactId="EBI-3946459">
        <id>Q9C5X0</id>
        <label>IAA34</label>
    </interactant>
    <organismsDiffer>false</organismsDiffer>
    <experiments>3</experiments>
</comment>
<comment type="interaction">
    <interactant intactId="EBI-1536925">
        <id>Q9FYK5</id>
    </interactant>
    <interactant intactId="EBI-4424076">
        <id>Q9FIR9</id>
        <label>LSU2</label>
    </interactant>
    <organismsDiffer>false</organismsDiffer>
    <experiments>3</experiments>
</comment>
<comment type="interaction">
    <interactant intactId="EBI-1536925">
        <id>Q9FYK5</id>
    </interactant>
    <interactant intactId="EBI-15211238">
        <id>Q9FFJ9</id>
        <label>MJJ3.20</label>
    </interactant>
    <organismsDiffer>false</organismsDiffer>
    <experiments>2</experiments>
</comment>
<comment type="interaction">
    <interactant intactId="EBI-1536925">
        <id>Q9FYK5</id>
    </interactant>
    <interactant intactId="EBI-2128593">
        <id>Q9LPQ3</id>
        <label>MKK7</label>
    </interactant>
    <organismsDiffer>false</organismsDiffer>
    <experiments>3</experiments>
</comment>
<comment type="interaction">
    <interactant intactId="EBI-1536925">
        <id>Q9FYK5</id>
    </interactant>
    <interactant intactId="EBI-1998046">
        <id>O22793</id>
        <label>MORF2</label>
    </interactant>
    <organismsDiffer>false</organismsDiffer>
    <experiments>3</experiments>
</comment>
<comment type="interaction">
    <interactant intactId="EBI-1536925">
        <id>Q9FYK5</id>
    </interactant>
    <interactant intactId="EBI-25511270">
        <id>Q9FX36</id>
        <label>MYB54</label>
    </interactant>
    <organismsDiffer>false</organismsDiffer>
    <experiments>4</experiments>
</comment>
<comment type="interaction">
    <interactant intactId="EBI-1536925">
        <id>Q9FYK5</id>
    </interactant>
    <interactant intactId="EBI-1536703">
        <id>Q9FUA4</id>
        <label>SPT</label>
    </interactant>
    <organismsDiffer>false</organismsDiffer>
    <experiments>3</experiments>
</comment>
<comment type="subcellular location">
    <subcellularLocation>
        <location evidence="7">Nucleus</location>
    </subcellularLocation>
</comment>
<comment type="tissue specificity">
    <text evidence="5 6">Cotyledons, leaf primordia and shoot apical meristems.</text>
</comment>
<comment type="developmental stage">
    <text evidence="5 6">First observed in the embryo at globular stage in cotyledons primordia and later confined to cotyledons tips and shoot apical meristem. Also detected in emerging leaf primordia.</text>
</comment>
<comment type="miscellaneous">
    <text>'Dornroeschen' means 'Sleeping beauty' in German.</text>
</comment>
<comment type="similarity">
    <text evidence="7">Belongs to the AP2/ERF transcription factor family. ERF subfamily.</text>
</comment>